<reference key="1">
    <citation type="journal article" date="1997" name="Nature">
        <title>The nucleotide sequence of Saccharomyces cerevisiae chromosome XVI.</title>
        <authorList>
            <person name="Bussey H."/>
            <person name="Storms R.K."/>
            <person name="Ahmed A."/>
            <person name="Albermann K."/>
            <person name="Allen E."/>
            <person name="Ansorge W."/>
            <person name="Araujo R."/>
            <person name="Aparicio A."/>
            <person name="Barrell B.G."/>
            <person name="Badcock K."/>
            <person name="Benes V."/>
            <person name="Botstein D."/>
            <person name="Bowman S."/>
            <person name="Brueckner M."/>
            <person name="Carpenter J."/>
            <person name="Cherry J.M."/>
            <person name="Chung E."/>
            <person name="Churcher C.M."/>
            <person name="Coster F."/>
            <person name="Davis K."/>
            <person name="Davis R.W."/>
            <person name="Dietrich F.S."/>
            <person name="Delius H."/>
            <person name="DiPaolo T."/>
            <person name="Dubois E."/>
            <person name="Duesterhoeft A."/>
            <person name="Duncan M."/>
            <person name="Floeth M."/>
            <person name="Fortin N."/>
            <person name="Friesen J.D."/>
            <person name="Fritz C."/>
            <person name="Goffeau A."/>
            <person name="Hall J."/>
            <person name="Hebling U."/>
            <person name="Heumann K."/>
            <person name="Hilbert H."/>
            <person name="Hillier L.W."/>
            <person name="Hunicke-Smith S."/>
            <person name="Hyman R.W."/>
            <person name="Johnston M."/>
            <person name="Kalman S."/>
            <person name="Kleine K."/>
            <person name="Komp C."/>
            <person name="Kurdi O."/>
            <person name="Lashkari D."/>
            <person name="Lew H."/>
            <person name="Lin A."/>
            <person name="Lin D."/>
            <person name="Louis E.J."/>
            <person name="Marathe R."/>
            <person name="Messenguy F."/>
            <person name="Mewes H.-W."/>
            <person name="Mirtipati S."/>
            <person name="Moestl D."/>
            <person name="Mueller-Auer S."/>
            <person name="Namath A."/>
            <person name="Nentwich U."/>
            <person name="Oefner P."/>
            <person name="Pearson D."/>
            <person name="Petel F.X."/>
            <person name="Pohl T.M."/>
            <person name="Purnelle B."/>
            <person name="Rajandream M.A."/>
            <person name="Rechmann S."/>
            <person name="Rieger M."/>
            <person name="Riles L."/>
            <person name="Roberts D."/>
            <person name="Schaefer M."/>
            <person name="Scharfe M."/>
            <person name="Scherens B."/>
            <person name="Schramm S."/>
            <person name="Schroeder M."/>
            <person name="Sdicu A.-M."/>
            <person name="Tettelin H."/>
            <person name="Urrestarazu L.A."/>
            <person name="Ushinsky S."/>
            <person name="Vierendeels F."/>
            <person name="Vissers S."/>
            <person name="Voss H."/>
            <person name="Walsh S.V."/>
            <person name="Wambutt R."/>
            <person name="Wang Y."/>
            <person name="Wedler E."/>
            <person name="Wedler H."/>
            <person name="Winnett E."/>
            <person name="Zhong W.-W."/>
            <person name="Zollner A."/>
            <person name="Vo D.H."/>
            <person name="Hani J."/>
        </authorList>
    </citation>
    <scope>NUCLEOTIDE SEQUENCE [LARGE SCALE GENOMIC DNA]</scope>
    <source>
        <strain>ATCC 204508 / S288c</strain>
    </source>
</reference>
<reference key="2">
    <citation type="journal article" date="2014" name="G3 (Bethesda)">
        <title>The reference genome sequence of Saccharomyces cerevisiae: Then and now.</title>
        <authorList>
            <person name="Engel S.R."/>
            <person name="Dietrich F.S."/>
            <person name="Fisk D.G."/>
            <person name="Binkley G."/>
            <person name="Balakrishnan R."/>
            <person name="Costanzo M.C."/>
            <person name="Dwight S.S."/>
            <person name="Hitz B.C."/>
            <person name="Karra K."/>
            <person name="Nash R.S."/>
            <person name="Weng S."/>
            <person name="Wong E.D."/>
            <person name="Lloyd P."/>
            <person name="Skrzypek M.S."/>
            <person name="Miyasato S.R."/>
            <person name="Simison M."/>
            <person name="Cherry J.M."/>
        </authorList>
    </citation>
    <scope>GENOME REANNOTATION</scope>
    <scope>SEQUENCE REVISION TO 848</scope>
    <source>
        <strain>ATCC 204508 / S288c</strain>
    </source>
</reference>
<reference key="3">
    <citation type="journal article" date="2001" name="J. Biol. Chem.">
        <title>All phox homology (PX) domains from Saccharomyces cerevisiae specifically recognize phosphatidylinositol 3-phosphate.</title>
        <authorList>
            <person name="Yu J.W."/>
            <person name="Lemmon M.A."/>
        </authorList>
    </citation>
    <scope>DOMAIN</scope>
</reference>
<reference key="4">
    <citation type="journal article" date="2003" name="Nature">
        <title>Global analysis of protein expression in yeast.</title>
        <authorList>
            <person name="Ghaemmaghami S."/>
            <person name="Huh W.-K."/>
            <person name="Bower K."/>
            <person name="Howson R.W."/>
            <person name="Belle A."/>
            <person name="Dephoure N."/>
            <person name="O'Shea E.K."/>
            <person name="Weissman J.S."/>
        </authorList>
    </citation>
    <scope>LEVEL OF PROTEIN EXPRESSION [LARGE SCALE ANALYSIS]</scope>
</reference>
<reference key="5">
    <citation type="journal article" date="2003" name="Proc. Natl. Acad. Sci. U.S.A.">
        <title>The proteome of Saccharomyces cerevisiae mitochondria.</title>
        <authorList>
            <person name="Sickmann A."/>
            <person name="Reinders J."/>
            <person name="Wagner Y."/>
            <person name="Joppich C."/>
            <person name="Zahedi R.P."/>
            <person name="Meyer H.E."/>
            <person name="Schoenfisch B."/>
            <person name="Perschil I."/>
            <person name="Chacinska A."/>
            <person name="Guiard B."/>
            <person name="Rehling P."/>
            <person name="Pfanner N."/>
            <person name="Meisinger C."/>
        </authorList>
    </citation>
    <scope>SUBCELLULAR LOCATION [LARGE SCALE ANALYSIS]</scope>
    <source>
        <strain>ATCC 76625 / YPH499</strain>
    </source>
</reference>
<reference key="6">
    <citation type="journal article" date="2009" name="Science">
        <title>Global analysis of Cdk1 substrate phosphorylation sites provides insights into evolution.</title>
        <authorList>
            <person name="Holt L.J."/>
            <person name="Tuch B.B."/>
            <person name="Villen J."/>
            <person name="Johnson A.D."/>
            <person name="Gygi S.P."/>
            <person name="Morgan D.O."/>
        </authorList>
    </citation>
    <scope>PHOSPHORYLATION [LARGE SCALE ANALYSIS] AT SER-310 AND SER-451</scope>
    <scope>IDENTIFICATION BY MASS SPECTROMETRY [LARGE SCALE ANALYSIS]</scope>
</reference>
<reference key="7">
    <citation type="journal article" date="2012" name="Proc. Natl. Acad. Sci. U.S.A.">
        <title>N-terminal acetylome analyses and functional insights of the N-terminal acetyltransferase NatB.</title>
        <authorList>
            <person name="Van Damme P."/>
            <person name="Lasa M."/>
            <person name="Polevoda B."/>
            <person name="Gazquez C."/>
            <person name="Elosegui-Artola A."/>
            <person name="Kim D.S."/>
            <person name="De Juan-Pardo E."/>
            <person name="Demeyer K."/>
            <person name="Hole K."/>
            <person name="Larrea E."/>
            <person name="Timmerman E."/>
            <person name="Prieto J."/>
            <person name="Arnesen T."/>
            <person name="Sherman F."/>
            <person name="Gevaert K."/>
            <person name="Aldabe R."/>
        </authorList>
    </citation>
    <scope>IDENTIFICATION BY MASS SPECTROMETRY [LARGE SCALE ANALYSIS]</scope>
</reference>
<reference key="8">
    <citation type="journal article" date="2022" name="Elife">
        <title>Systematic analysis of membrane contact sites in Saccharomyces cerevisiae uncovers modulators of cellular lipid distribution.</title>
        <authorList>
            <person name="Castro I.G."/>
            <person name="Shortill S.P."/>
            <person name="Dziurdzik S.K."/>
            <person name="Cadou A."/>
            <person name="Ganesan S."/>
            <person name="Valenti R."/>
            <person name="David Y."/>
            <person name="Davey M."/>
            <person name="Mattes C."/>
            <person name="Thomas F.B."/>
            <person name="Avraham R.E."/>
            <person name="Meyer H."/>
            <person name="Fadel A."/>
            <person name="Fenech E.J."/>
            <person name="Ernst R."/>
            <person name="Zaremberg V."/>
            <person name="Levine T.P."/>
            <person name="Stefan C."/>
            <person name="Conibear E."/>
            <person name="Schuldiner M."/>
        </authorList>
    </citation>
    <scope>DUNCTION</scope>
    <scope>SUBCELLULAR LOCATION</scope>
    <scope>DISRUPTION PHENOTYPE</scope>
</reference>
<dbReference type="EMBL" id="U51033">
    <property type="protein sequence ID" value="AAB68142.1"/>
    <property type="molecule type" value="Genomic_DNA"/>
</dbReference>
<dbReference type="EMBL" id="BK006949">
    <property type="protein sequence ID" value="DAA11512.2"/>
    <property type="molecule type" value="Genomic_DNA"/>
</dbReference>
<dbReference type="PIR" id="S69079">
    <property type="entry name" value="S69079"/>
</dbReference>
<dbReference type="RefSeq" id="NP_015422.2">
    <property type="nucleotide sequence ID" value="NM_001184194.2"/>
</dbReference>
<dbReference type="BioGRID" id="36264">
    <property type="interactions" value="121"/>
</dbReference>
<dbReference type="DIP" id="DIP-49374N"/>
<dbReference type="FunCoup" id="Q06839">
    <property type="interactions" value="40"/>
</dbReference>
<dbReference type="IntAct" id="Q06839">
    <property type="interactions" value="13"/>
</dbReference>
<dbReference type="MINT" id="Q06839"/>
<dbReference type="STRING" id="4932.YPR097W"/>
<dbReference type="CarbonylDB" id="Q06839"/>
<dbReference type="GlyGen" id="Q06839">
    <property type="glycosylation" value="1 site"/>
</dbReference>
<dbReference type="iPTMnet" id="Q06839"/>
<dbReference type="PaxDb" id="4932-YPR097W"/>
<dbReference type="PeptideAtlas" id="Q06839"/>
<dbReference type="EnsemblFungi" id="YPR097W_mRNA">
    <property type="protein sequence ID" value="YPR097W"/>
    <property type="gene ID" value="YPR097W"/>
</dbReference>
<dbReference type="GeneID" id="856212"/>
<dbReference type="KEGG" id="sce:YPR097W"/>
<dbReference type="AGR" id="SGD:S000006301"/>
<dbReference type="SGD" id="S000006301">
    <property type="gene designation" value="LEC1"/>
</dbReference>
<dbReference type="VEuPathDB" id="FungiDB:YPR097W"/>
<dbReference type="eggNOG" id="KOG2273">
    <property type="taxonomic scope" value="Eukaryota"/>
</dbReference>
<dbReference type="HOGENOM" id="CLU_007739_1_0_1"/>
<dbReference type="InParanoid" id="Q06839"/>
<dbReference type="OMA" id="QLWQDPE"/>
<dbReference type="OrthoDB" id="2117459at2759"/>
<dbReference type="BioCyc" id="YEAST:G3O-34238-MONOMER"/>
<dbReference type="BioGRID-ORCS" id="856212">
    <property type="hits" value="0 hits in 10 CRISPR screens"/>
</dbReference>
<dbReference type="PRO" id="PR:Q06839"/>
<dbReference type="Proteomes" id="UP000002311">
    <property type="component" value="Chromosome XVI"/>
</dbReference>
<dbReference type="RNAct" id="Q06839">
    <property type="molecule type" value="protein"/>
</dbReference>
<dbReference type="GO" id="GO:0005789">
    <property type="term" value="C:endoplasmic reticulum membrane"/>
    <property type="evidence" value="ECO:0007669"/>
    <property type="project" value="UniProtKB-SubCell"/>
</dbReference>
<dbReference type="GO" id="GO:0005811">
    <property type="term" value="C:lipid droplet"/>
    <property type="evidence" value="ECO:0007669"/>
    <property type="project" value="UniProtKB-SubCell"/>
</dbReference>
<dbReference type="GO" id="GO:0005739">
    <property type="term" value="C:mitochondrion"/>
    <property type="evidence" value="ECO:0007005"/>
    <property type="project" value="SGD"/>
</dbReference>
<dbReference type="GO" id="GO:0035091">
    <property type="term" value="F:phosphatidylinositol binding"/>
    <property type="evidence" value="ECO:0000314"/>
    <property type="project" value="SGD"/>
</dbReference>
<dbReference type="CDD" id="cd06869">
    <property type="entry name" value="PX_UP2_fungi"/>
    <property type="match status" value="1"/>
</dbReference>
<dbReference type="Gene3D" id="3.30.1520.10">
    <property type="entry name" value="Phox-like domain"/>
    <property type="match status" value="1"/>
</dbReference>
<dbReference type="InterPro" id="IPR047168">
    <property type="entry name" value="LEC1-like"/>
</dbReference>
<dbReference type="InterPro" id="IPR024554">
    <property type="entry name" value="LEC1-like_C"/>
</dbReference>
<dbReference type="InterPro" id="IPR024555">
    <property type="entry name" value="PX-associated"/>
</dbReference>
<dbReference type="InterPro" id="IPR001683">
    <property type="entry name" value="PX_dom"/>
</dbReference>
<dbReference type="InterPro" id="IPR036871">
    <property type="entry name" value="PX_dom_sf"/>
</dbReference>
<dbReference type="PANTHER" id="PTHR47185">
    <property type="entry name" value="PX DOMAIN-CONTAINING PROTEIN YPR097W"/>
    <property type="match status" value="1"/>
</dbReference>
<dbReference type="PANTHER" id="PTHR47185:SF1">
    <property type="entry name" value="PX DOMAIN-CONTAINING PROTEIN YPR097W"/>
    <property type="match status" value="1"/>
</dbReference>
<dbReference type="Pfam" id="PF12825">
    <property type="entry name" value="DUF3818"/>
    <property type="match status" value="1"/>
</dbReference>
<dbReference type="Pfam" id="PF00787">
    <property type="entry name" value="PX"/>
    <property type="match status" value="1"/>
</dbReference>
<dbReference type="Pfam" id="PF12828">
    <property type="entry name" value="PXB"/>
    <property type="match status" value="1"/>
</dbReference>
<dbReference type="SMART" id="SM00312">
    <property type="entry name" value="PX"/>
    <property type="match status" value="1"/>
</dbReference>
<dbReference type="SUPFAM" id="SSF64268">
    <property type="entry name" value="PX domain"/>
    <property type="match status" value="1"/>
</dbReference>
<dbReference type="PROSITE" id="PS50195">
    <property type="entry name" value="PX"/>
    <property type="match status" value="1"/>
</dbReference>
<accession>Q06839</accession>
<accession>D6W496</accession>
<gene>
    <name evidence="6" type="primary">LEC1</name>
    <name type="ordered locus">YPR097W</name>
</gene>
<feature type="chain" id="PRO_0000257826" description="PX domain-containing protein LEC1">
    <location>
        <begin position="1"/>
        <end position="1073"/>
    </location>
</feature>
<feature type="domain" description="PX" evidence="1">
    <location>
        <begin position="273"/>
        <end position="506"/>
    </location>
</feature>
<feature type="region of interest" description="Disordered" evidence="2">
    <location>
        <begin position="218"/>
        <end position="240"/>
    </location>
</feature>
<feature type="region of interest" description="Disordered" evidence="2">
    <location>
        <begin position="431"/>
        <end position="456"/>
    </location>
</feature>
<feature type="compositionally biased region" description="Basic and acidic residues" evidence="2">
    <location>
        <begin position="218"/>
        <end position="228"/>
    </location>
</feature>
<feature type="compositionally biased region" description="Low complexity" evidence="2">
    <location>
        <begin position="229"/>
        <end position="238"/>
    </location>
</feature>
<feature type="compositionally biased region" description="Acidic residues" evidence="2">
    <location>
        <begin position="432"/>
        <end position="453"/>
    </location>
</feature>
<feature type="modified residue" description="Phosphoserine" evidence="8">
    <location>
        <position position="310"/>
    </location>
</feature>
<feature type="modified residue" description="Phosphoserine" evidence="8">
    <location>
        <position position="451"/>
    </location>
</feature>
<feature type="sequence conflict" description="In Ref. 1; AAB68142." evidence="7" ref="1">
    <original>S</original>
    <variation>G</variation>
    <location>
        <position position="848"/>
    </location>
</feature>
<evidence type="ECO:0000255" key="1">
    <source>
        <dbReference type="PROSITE-ProRule" id="PRU00147"/>
    </source>
</evidence>
<evidence type="ECO:0000256" key="2">
    <source>
        <dbReference type="SAM" id="MobiDB-lite"/>
    </source>
</evidence>
<evidence type="ECO:0000269" key="3">
    <source>
    </source>
</evidence>
<evidence type="ECO:0000269" key="4">
    <source>
    </source>
</evidence>
<evidence type="ECO:0000269" key="5">
    <source>
    </source>
</evidence>
<evidence type="ECO:0000303" key="6">
    <source>
    </source>
</evidence>
<evidence type="ECO:0000305" key="7"/>
<evidence type="ECO:0007744" key="8">
    <source>
    </source>
</evidence>
<sequence length="1073" mass="123084">MITQDTPALNPTEEHYLKRELLRCQLDYEIGKLNDQFALRKFGYPFSPNDPTAPQPISNNDSSPVLGGKGHFSVNYPMLSYVLQEFISTFPLLSTNLLVDEKFWQSKVQVFFEHFMSLGFSESYDREEASKRKKVSKKLSKVILLLFNSGVGSFQEQAYYNEDKFVLQSGQARKRSNIEKFAMPTRENLENLLTNESVFINGWDVNIISVFNKNSRKCTESVDNDKSSKSTPTSSPKSHAIKSFASTSKWMKNAFNNTINSTINSMPESSASLFSKLSLGVPSTKSKQSRKHHYFLIKIKKQDDDDQDNSNEENSNLDHHAGYFYVTRTYSDFKKLSHDLKSEFPGKKCPRLPHRNKKVTSMITKTEVLHNGQTKSAAREKIVNTFDTDLQSASESDNSSFLQTTNELSATETVLTEKETETLRKNILNEIKEEDNIDEDEYEEEGEGEESDFDEYKDASDSKINTLVGEKMRTSLRQYLRTLCKDAEVSQSSSIRRFFLSGPNLDIKDINPKIADDIRNRALIDVSNLENQIRFQQMALEKSLKLQDSMKDFKTSLLKDEKYLMSLLVEIKDNTKVEDLSPLLQDFVEWCKIYISSMIYQMFLGNDNSYELYTQIRRLHKLMPYTVMGQIMKFTNPIAIMRGMIELFMAQPFGGHSLLQTMFSTILTDDLKTQKVAIKELERKIAEMDPGASVVTKCLKDFVFNNDTKDEHDTKLFTMDAVNAESESMNMPVPLIVLMKSAAANLIPDEVVAGLIESYSSWKLQKEDTDALNVTSEDQSGIYFTHVKDLWQLYIKEHDKQLMRQLWQDPELTQMLKAIVTMIYEPMVKIFKVARMDVALKNFEKFMSDLIRLVDDVINGQLGVSTQFDVVEEIHNLVTKHQDAFFEFIHDVYLNDSEGIFEGFITWITTIVKFLQKSKFGGPSERIDFNKLICRDDIDIDVKLLKVQVNNVLNKKIGARKIYKKLLDLKVKQGTKQNNKHAAGILQKNWSDINSLVMPSSSGSFGLGDGDLVDLDLDTGDYDFLHKENEVELEKQYKDLLNLVVDESEIDKLRSQVFAQELKNYLEAQIAKK</sequence>
<comment type="function">
    <text evidence="5">Phosphoinositide-binding protein that plays a role in regulation of ergosterol distribution in the cell (PubMed:36354737). Facilitates ergosterol transport between plasma membrane and lipid droplets (PubMed:36354737).</text>
</comment>
<comment type="subcellular location">
    <subcellularLocation>
        <location evidence="5">Endoplasmic reticulum membrane</location>
        <topology evidence="5">Peripheral membrane protein</topology>
    </subcellularLocation>
    <subcellularLocation>
        <location evidence="5">Lipid droplet</location>
    </subcellularLocation>
    <text evidence="5">Associated with endoplasmic reticulum-lipid droplet contact sites.</text>
</comment>
<comment type="domain">
    <text evidence="3">The PX domain binds phosphatidylinositol 3-phosphate which is necessary for peripheral membrane localization.</text>
</comment>
<comment type="disruption phenotype">
    <text evidence="5">Leads to a stronger localization of ergosterol to daughter cells, with the additional accumulation at the bud neck.</text>
</comment>
<comment type="miscellaneous">
    <text evidence="4">Present with 3080 molecules/cell in log phase SD medium.</text>
</comment>
<organism>
    <name type="scientific">Saccharomyces cerevisiae (strain ATCC 204508 / S288c)</name>
    <name type="common">Baker's yeast</name>
    <dbReference type="NCBI Taxonomy" id="559292"/>
    <lineage>
        <taxon>Eukaryota</taxon>
        <taxon>Fungi</taxon>
        <taxon>Dikarya</taxon>
        <taxon>Ascomycota</taxon>
        <taxon>Saccharomycotina</taxon>
        <taxon>Saccharomycetes</taxon>
        <taxon>Saccharomycetales</taxon>
        <taxon>Saccharomycetaceae</taxon>
        <taxon>Saccharomyces</taxon>
    </lineage>
</organism>
<keyword id="KW-0256">Endoplasmic reticulum</keyword>
<keyword id="KW-0551">Lipid droplet</keyword>
<keyword id="KW-0472">Membrane</keyword>
<keyword id="KW-0597">Phosphoprotein</keyword>
<keyword id="KW-1185">Reference proteome</keyword>
<proteinExistence type="evidence at protein level"/>
<name>LEC1_YEAST</name>
<protein>
    <recommendedName>
        <fullName evidence="6">PX domain-containing protein LEC1</fullName>
    </recommendedName>
    <alternativeName>
        <fullName evidence="6">Lipid-droplet ergosterol cortex protein 1</fullName>
    </alternativeName>
</protein>